<name>LSG1_HAEIN</name>
<proteinExistence type="inferred from homology"/>
<feature type="chain" id="PRO_0000166456" description="Lsg locus putative protein 1">
    <location>
        <begin position="1"/>
        <end position="401"/>
    </location>
</feature>
<feature type="transmembrane region" description="Helical" evidence="1">
    <location>
        <begin position="8"/>
        <end position="28"/>
    </location>
</feature>
<feature type="transmembrane region" description="Helical" evidence="1">
    <location>
        <begin position="36"/>
        <end position="56"/>
    </location>
</feature>
<feature type="transmembrane region" description="Helical" evidence="1">
    <location>
        <begin position="87"/>
        <end position="107"/>
    </location>
</feature>
<feature type="transmembrane region" description="Helical" evidence="1">
    <location>
        <begin position="132"/>
        <end position="152"/>
    </location>
</feature>
<feature type="transmembrane region" description="Helical" evidence="1">
    <location>
        <begin position="162"/>
        <end position="182"/>
    </location>
</feature>
<feature type="transmembrane region" description="Helical" evidence="1">
    <location>
        <begin position="199"/>
        <end position="219"/>
    </location>
</feature>
<feature type="transmembrane region" description="Helical" evidence="1">
    <location>
        <begin position="237"/>
        <end position="257"/>
    </location>
</feature>
<feature type="transmembrane region" description="Helical" evidence="1">
    <location>
        <begin position="282"/>
        <end position="302"/>
    </location>
</feature>
<feature type="transmembrane region" description="Helical" evidence="1">
    <location>
        <begin position="320"/>
        <end position="340"/>
    </location>
</feature>
<feature type="transmembrane region" description="Helical" evidence="1">
    <location>
        <begin position="352"/>
        <end position="372"/>
    </location>
</feature>
<feature type="transmembrane region" description="Helical" evidence="1">
    <location>
        <begin position="374"/>
        <end position="394"/>
    </location>
</feature>
<feature type="sequence conflict" description="In Ref. 1; AAA24978." evidence="2" ref="1">
    <original>V</original>
    <variation>I</variation>
    <location>
        <position position="249"/>
    </location>
</feature>
<feature type="sequence conflict" description="In Ref. 1; AAA24978." evidence="2" ref="1">
    <original>V</original>
    <variation>I</variation>
    <location>
        <position position="276"/>
    </location>
</feature>
<feature type="sequence conflict" description="In Ref. 1; AAA24978." evidence="2" ref="1">
    <original>I</original>
    <variation>V</variation>
    <location>
        <position position="358"/>
    </location>
</feature>
<dbReference type="EMBL" id="M94855">
    <property type="protein sequence ID" value="AAA24978.1"/>
    <property type="molecule type" value="Genomic_DNA"/>
</dbReference>
<dbReference type="EMBL" id="L42023">
    <property type="protein sequence ID" value="AAC23346.1"/>
    <property type="status" value="ALT_INIT"/>
    <property type="molecule type" value="Genomic_DNA"/>
</dbReference>
<dbReference type="PIR" id="H64175">
    <property type="entry name" value="H64175"/>
</dbReference>
<dbReference type="RefSeq" id="NP_439842.2">
    <property type="nucleotide sequence ID" value="NC_000907.1"/>
</dbReference>
<dbReference type="SMR" id="P71399"/>
<dbReference type="STRING" id="71421.HI_1700"/>
<dbReference type="EnsemblBacteria" id="AAC23346">
    <property type="protein sequence ID" value="AAC23346"/>
    <property type="gene ID" value="HI_1700"/>
</dbReference>
<dbReference type="KEGG" id="hin:HI_1700"/>
<dbReference type="PATRIC" id="fig|71421.8.peg.1779"/>
<dbReference type="eggNOG" id="COG2244">
    <property type="taxonomic scope" value="Bacteria"/>
</dbReference>
<dbReference type="HOGENOM" id="CLU_022017_7_0_6"/>
<dbReference type="OrthoDB" id="9815248at2"/>
<dbReference type="PhylomeDB" id="P71399"/>
<dbReference type="BioCyc" id="HINF71421:G1GJ1-1716-MONOMER"/>
<dbReference type="Proteomes" id="UP000000579">
    <property type="component" value="Chromosome"/>
</dbReference>
<dbReference type="GO" id="GO:0005886">
    <property type="term" value="C:plasma membrane"/>
    <property type="evidence" value="ECO:0007669"/>
    <property type="project" value="UniProtKB-SubCell"/>
</dbReference>
<dbReference type="InterPro" id="IPR002797">
    <property type="entry name" value="Polysacc_synth"/>
</dbReference>
<dbReference type="InterPro" id="IPR052556">
    <property type="entry name" value="PolySynth_Transporter"/>
</dbReference>
<dbReference type="PANTHER" id="PTHR43424">
    <property type="entry name" value="LOCUS PUTATIVE PROTEIN 1-RELATED"/>
    <property type="match status" value="1"/>
</dbReference>
<dbReference type="PANTHER" id="PTHR43424:SF1">
    <property type="entry name" value="LOCUS PUTATIVE PROTEIN 1-RELATED"/>
    <property type="match status" value="1"/>
</dbReference>
<dbReference type="Pfam" id="PF01943">
    <property type="entry name" value="Polysacc_synt"/>
    <property type="match status" value="1"/>
</dbReference>
<comment type="subcellular location">
    <subcellularLocation>
        <location evidence="2">Cell membrane</location>
        <topology evidence="2">Multi-pass membrane protein</topology>
    </subcellularLocation>
</comment>
<comment type="similarity">
    <text evidence="2">Belongs to the polysaccharide synthase family. HI_0867/HI_1700 subfamily.</text>
</comment>
<comment type="sequence caution" evidence="2">
    <conflict type="erroneous initiation">
        <sequence resource="EMBL-CDS" id="AAC23346"/>
    </conflict>
</comment>
<reference key="1">
    <citation type="submission" date="1992-06" db="EMBL/GenBank/DDBJ databases">
        <title>Characterization and sequence of the lsg locus from Haemophilus influenzae.</title>
        <authorList>
            <person name="McLaughlin R."/>
            <person name="Abu Kwaik Y."/>
            <person name="Young R."/>
            <person name="Spinola S."/>
            <person name="Apicella M."/>
        </authorList>
    </citation>
    <scope>NUCLEOTIDE SEQUENCE [GENOMIC DNA]</scope>
    <source>
        <strain>A2</strain>
    </source>
</reference>
<reference key="2">
    <citation type="journal article" date="1995" name="Science">
        <title>Whole-genome random sequencing and assembly of Haemophilus influenzae Rd.</title>
        <authorList>
            <person name="Fleischmann R.D."/>
            <person name="Adams M.D."/>
            <person name="White O."/>
            <person name="Clayton R.A."/>
            <person name="Kirkness E.F."/>
            <person name="Kerlavage A.R."/>
            <person name="Bult C.J."/>
            <person name="Tomb J.-F."/>
            <person name="Dougherty B.A."/>
            <person name="Merrick J.M."/>
            <person name="McKenney K."/>
            <person name="Sutton G.G."/>
            <person name="FitzHugh W."/>
            <person name="Fields C.A."/>
            <person name="Gocayne J.D."/>
            <person name="Scott J.D."/>
            <person name="Shirley R."/>
            <person name="Liu L.-I."/>
            <person name="Glodek A."/>
            <person name="Kelley J.M."/>
            <person name="Weidman J.F."/>
            <person name="Phillips C.A."/>
            <person name="Spriggs T."/>
            <person name="Hedblom E."/>
            <person name="Cotton M.D."/>
            <person name="Utterback T.R."/>
            <person name="Hanna M.C."/>
            <person name="Nguyen D.T."/>
            <person name="Saudek D.M."/>
            <person name="Brandon R.C."/>
            <person name="Fine L.D."/>
            <person name="Fritchman J.L."/>
            <person name="Fuhrmann J.L."/>
            <person name="Geoghagen N.S.M."/>
            <person name="Gnehm C.L."/>
            <person name="McDonald L.A."/>
            <person name="Small K.V."/>
            <person name="Fraser C.M."/>
            <person name="Smith H.O."/>
            <person name="Venter J.C."/>
        </authorList>
    </citation>
    <scope>NUCLEOTIDE SEQUENCE [LARGE SCALE GENOMIC DNA]</scope>
    <source>
        <strain>ATCC 51907 / DSM 11121 / KW20 / Rd</strain>
    </source>
</reference>
<protein>
    <recommendedName>
        <fullName>Lsg locus putative protein 1</fullName>
    </recommendedName>
</protein>
<accession>P71399</accession>
<accession>Q48210</accession>
<evidence type="ECO:0000255" key="1"/>
<evidence type="ECO:0000305" key="2"/>
<organism>
    <name type="scientific">Haemophilus influenzae (strain ATCC 51907 / DSM 11121 / KW20 / Rd)</name>
    <dbReference type="NCBI Taxonomy" id="71421"/>
    <lineage>
        <taxon>Bacteria</taxon>
        <taxon>Pseudomonadati</taxon>
        <taxon>Pseudomonadota</taxon>
        <taxon>Gammaproteobacteria</taxon>
        <taxon>Pasteurellales</taxon>
        <taxon>Pasteurellaceae</taxon>
        <taxon>Haemophilus</taxon>
    </lineage>
</organism>
<gene>
    <name type="ordered locus">HI_1700</name>
</gene>
<sequence>MKVFKDSVIYLVGELSSKLVPFLLLPYLSRKLGVEGYGSLSYYQTFLSLFLIVVSLTQEGAISRYFYFYGKRSLNLVVNTGYAYTTIIGSIILIGCWIAQSEILFYAALSSIFQSFLNVQLSVRQCQKKAWSYAFIQFSLTVTGAVFTVALLEYYQNDLVEKRILAILLSNLVVWFFSYFLYRKSTTSKKYQFKHYQSALFYILGFGLPLILHYASFFLKGQLDRIFIYHKFSETDLGLYAMGAQLALVVSIAIQALNKAIIPYFYEALKQKKLVVQQLHKWALFSFLLIPIPALIMWIIPEDVLVWILGSQFVGTKYYFILFLISTTLSIPYLILVNYLFYYGKNKLISQCSVLSTIIYVASLVALTFTEIKYIPYAGIIGSLSIIPILYFMTSKVSKTL</sequence>
<keyword id="KW-1003">Cell membrane</keyword>
<keyword id="KW-0472">Membrane</keyword>
<keyword id="KW-1185">Reference proteome</keyword>
<keyword id="KW-0812">Transmembrane</keyword>
<keyword id="KW-1133">Transmembrane helix</keyword>